<feature type="chain" id="PRO_0000273879" description="Large ribosomal subunit protein uL30">
    <location>
        <begin position="1"/>
        <end position="60"/>
    </location>
</feature>
<sequence length="60" mass="6981">MARLKITQTKSYIGSKQNHRDTLRSLGLKRLNDSVVKEDRPEFRGMVQTVRHLVTVEEVD</sequence>
<name>RL30_STRFL</name>
<proteinExistence type="inferred from homology"/>
<reference key="1">
    <citation type="journal article" date="2005" name="J. Antibiot.">
        <title>Spectinomycin resistance in rpsE mutants is recessive in Streptomyces roseosporus.</title>
        <authorList>
            <person name="He X."/>
            <person name="Miao V."/>
            <person name="Baltz R.H."/>
        </authorList>
    </citation>
    <scope>NUCLEOTIDE SEQUENCE [GENOMIC DNA]</scope>
    <source>
        <strain>UA343 /NRRL 15998</strain>
    </source>
</reference>
<keyword id="KW-0687">Ribonucleoprotein</keyword>
<keyword id="KW-0689">Ribosomal protein</keyword>
<organism>
    <name type="scientific">Streptomyces filamentosus</name>
    <name type="common">Streptomyces roseosporus</name>
    <dbReference type="NCBI Taxonomy" id="67294"/>
    <lineage>
        <taxon>Bacteria</taxon>
        <taxon>Bacillati</taxon>
        <taxon>Actinomycetota</taxon>
        <taxon>Actinomycetes</taxon>
        <taxon>Kitasatosporales</taxon>
        <taxon>Streptomycetaceae</taxon>
        <taxon>Streptomyces</taxon>
    </lineage>
</organism>
<comment type="subunit">
    <text evidence="1">Part of the 50S ribosomal subunit.</text>
</comment>
<comment type="similarity">
    <text evidence="1">Belongs to the universal ribosomal protein uL30 family.</text>
</comment>
<accession>Q2NNB6</accession>
<protein>
    <recommendedName>
        <fullName evidence="1">Large ribosomal subunit protein uL30</fullName>
    </recommendedName>
    <alternativeName>
        <fullName evidence="2">50S ribosomal protein L30</fullName>
    </alternativeName>
</protein>
<gene>
    <name evidence="1" type="primary">rpmD</name>
</gene>
<dbReference type="EMBL" id="AY772011">
    <property type="protein sequence ID" value="AAW47263.1"/>
    <property type="molecule type" value="Genomic_DNA"/>
</dbReference>
<dbReference type="RefSeq" id="WP_006126892.1">
    <property type="nucleotide sequence ID" value="NZ_CP098609.1"/>
</dbReference>
<dbReference type="SMR" id="Q2NNB6"/>
<dbReference type="GeneID" id="27784953"/>
<dbReference type="GeneID" id="91368024"/>
<dbReference type="GO" id="GO:0022625">
    <property type="term" value="C:cytosolic large ribosomal subunit"/>
    <property type="evidence" value="ECO:0007669"/>
    <property type="project" value="TreeGrafter"/>
</dbReference>
<dbReference type="GO" id="GO:0003735">
    <property type="term" value="F:structural constituent of ribosome"/>
    <property type="evidence" value="ECO:0007669"/>
    <property type="project" value="InterPro"/>
</dbReference>
<dbReference type="GO" id="GO:0006412">
    <property type="term" value="P:translation"/>
    <property type="evidence" value="ECO:0007669"/>
    <property type="project" value="UniProtKB-UniRule"/>
</dbReference>
<dbReference type="CDD" id="cd01658">
    <property type="entry name" value="Ribosomal_L30"/>
    <property type="match status" value="1"/>
</dbReference>
<dbReference type="FunFam" id="3.30.1390.20:FF:000001">
    <property type="entry name" value="50S ribosomal protein L30"/>
    <property type="match status" value="1"/>
</dbReference>
<dbReference type="Gene3D" id="3.30.1390.20">
    <property type="entry name" value="Ribosomal protein L30, ferredoxin-like fold domain"/>
    <property type="match status" value="1"/>
</dbReference>
<dbReference type="HAMAP" id="MF_01371_B">
    <property type="entry name" value="Ribosomal_uL30_B"/>
    <property type="match status" value="1"/>
</dbReference>
<dbReference type="InterPro" id="IPR036919">
    <property type="entry name" value="Ribo_uL30_ferredoxin-like_sf"/>
</dbReference>
<dbReference type="InterPro" id="IPR005996">
    <property type="entry name" value="Ribosomal_uL30_bac-type"/>
</dbReference>
<dbReference type="InterPro" id="IPR016082">
    <property type="entry name" value="Ribosomal_uL30_ferredoxin-like"/>
</dbReference>
<dbReference type="NCBIfam" id="TIGR01308">
    <property type="entry name" value="rpmD_bact"/>
    <property type="match status" value="1"/>
</dbReference>
<dbReference type="PANTHER" id="PTHR15892:SF2">
    <property type="entry name" value="LARGE RIBOSOMAL SUBUNIT PROTEIN UL30M"/>
    <property type="match status" value="1"/>
</dbReference>
<dbReference type="PANTHER" id="PTHR15892">
    <property type="entry name" value="MITOCHONDRIAL RIBOSOMAL PROTEIN L30"/>
    <property type="match status" value="1"/>
</dbReference>
<dbReference type="Pfam" id="PF00327">
    <property type="entry name" value="Ribosomal_L30"/>
    <property type="match status" value="1"/>
</dbReference>
<dbReference type="PIRSF" id="PIRSF002211">
    <property type="entry name" value="Ribosomal_L30_bac-type"/>
    <property type="match status" value="1"/>
</dbReference>
<dbReference type="SUPFAM" id="SSF55129">
    <property type="entry name" value="Ribosomal protein L30p/L7e"/>
    <property type="match status" value="1"/>
</dbReference>
<evidence type="ECO:0000255" key="1">
    <source>
        <dbReference type="HAMAP-Rule" id="MF_01371"/>
    </source>
</evidence>
<evidence type="ECO:0000305" key="2"/>